<geneLocation type="chloroplast"/>
<accession>Q1KXX8</accession>
<evidence type="ECO:0000255" key="1">
    <source>
        <dbReference type="HAMAP-Rule" id="MF_01390"/>
    </source>
</evidence>
<protein>
    <recommendedName>
        <fullName evidence="1">Maturase K</fullName>
    </recommendedName>
    <alternativeName>
        <fullName evidence="1">Intron maturase</fullName>
    </alternativeName>
</protein>
<gene>
    <name evidence="1" type="primary">matK</name>
</gene>
<name>MATK_HELAN</name>
<dbReference type="EMBL" id="DQ383815">
    <property type="protein sequence ID" value="ABD47127.1"/>
    <property type="molecule type" value="Genomic_DNA"/>
</dbReference>
<dbReference type="RefSeq" id="YP_588098.1">
    <property type="nucleotide sequence ID" value="NC_007977.1"/>
</dbReference>
<dbReference type="GeneID" id="4055638"/>
<dbReference type="KEGG" id="han:4055638"/>
<dbReference type="OrthoDB" id="1886907at2759"/>
<dbReference type="PhylomeDB" id="Q1KXX8"/>
<dbReference type="GO" id="GO:0009507">
    <property type="term" value="C:chloroplast"/>
    <property type="evidence" value="ECO:0007669"/>
    <property type="project" value="UniProtKB-SubCell"/>
</dbReference>
<dbReference type="GO" id="GO:0003723">
    <property type="term" value="F:RNA binding"/>
    <property type="evidence" value="ECO:0007669"/>
    <property type="project" value="UniProtKB-KW"/>
</dbReference>
<dbReference type="GO" id="GO:0006397">
    <property type="term" value="P:mRNA processing"/>
    <property type="evidence" value="ECO:0007669"/>
    <property type="project" value="UniProtKB-KW"/>
</dbReference>
<dbReference type="GO" id="GO:0008380">
    <property type="term" value="P:RNA splicing"/>
    <property type="evidence" value="ECO:0007669"/>
    <property type="project" value="UniProtKB-UniRule"/>
</dbReference>
<dbReference type="GO" id="GO:0008033">
    <property type="term" value="P:tRNA processing"/>
    <property type="evidence" value="ECO:0007669"/>
    <property type="project" value="UniProtKB-KW"/>
</dbReference>
<dbReference type="HAMAP" id="MF_01390">
    <property type="entry name" value="MatK"/>
    <property type="match status" value="1"/>
</dbReference>
<dbReference type="InterPro" id="IPR024937">
    <property type="entry name" value="Domain_X"/>
</dbReference>
<dbReference type="InterPro" id="IPR002866">
    <property type="entry name" value="Maturase_MatK"/>
</dbReference>
<dbReference type="InterPro" id="IPR024942">
    <property type="entry name" value="Maturase_MatK_N"/>
</dbReference>
<dbReference type="PANTHER" id="PTHR34811">
    <property type="entry name" value="MATURASE K"/>
    <property type="match status" value="1"/>
</dbReference>
<dbReference type="PANTHER" id="PTHR34811:SF1">
    <property type="entry name" value="MATURASE K"/>
    <property type="match status" value="1"/>
</dbReference>
<dbReference type="Pfam" id="PF01348">
    <property type="entry name" value="Intron_maturas2"/>
    <property type="match status" value="1"/>
</dbReference>
<dbReference type="Pfam" id="PF01824">
    <property type="entry name" value="MatK_N"/>
    <property type="match status" value="1"/>
</dbReference>
<keyword id="KW-0150">Chloroplast</keyword>
<keyword id="KW-0507">mRNA processing</keyword>
<keyword id="KW-0934">Plastid</keyword>
<keyword id="KW-0694">RNA-binding</keyword>
<keyword id="KW-0819">tRNA processing</keyword>
<organism>
    <name type="scientific">Helianthus annuus</name>
    <name type="common">Common sunflower</name>
    <dbReference type="NCBI Taxonomy" id="4232"/>
    <lineage>
        <taxon>Eukaryota</taxon>
        <taxon>Viridiplantae</taxon>
        <taxon>Streptophyta</taxon>
        <taxon>Embryophyta</taxon>
        <taxon>Tracheophyta</taxon>
        <taxon>Spermatophyta</taxon>
        <taxon>Magnoliopsida</taxon>
        <taxon>eudicotyledons</taxon>
        <taxon>Gunneridae</taxon>
        <taxon>Pentapetalae</taxon>
        <taxon>asterids</taxon>
        <taxon>campanulids</taxon>
        <taxon>Asterales</taxon>
        <taxon>Asteraceae</taxon>
        <taxon>Asteroideae</taxon>
        <taxon>Heliantheae alliance</taxon>
        <taxon>Heliantheae</taxon>
        <taxon>Helianthus</taxon>
    </lineage>
</organism>
<comment type="function">
    <text evidence="1">Usually encoded in the trnK tRNA gene intron. Probably assists in splicing its own and other chloroplast group II introns.</text>
</comment>
<comment type="subcellular location">
    <subcellularLocation>
        <location>Plastid</location>
        <location>Chloroplast</location>
    </subcellularLocation>
</comment>
<comment type="similarity">
    <text evidence="1">Belongs to the intron maturase 2 family. MatK subfamily.</text>
</comment>
<feature type="chain" id="PRO_0000355938" description="Maturase K">
    <location>
        <begin position="1"/>
        <end position="500"/>
    </location>
</feature>
<reference key="1">
    <citation type="submission" date="2006-01" db="EMBL/GenBank/DDBJ databases">
        <title>A comparison of the first two published chloroplast genomes in Asteraceae: Lactuca and Helianthus.</title>
        <authorList>
            <person name="Timme R.E."/>
            <person name="Kuehl J.V."/>
            <person name="Boore J.L."/>
            <person name="Jansen R.K."/>
        </authorList>
    </citation>
    <scope>NUCLEOTIDE SEQUENCE [LARGE SCALE GENOMIC DNA]</scope>
    <source>
        <strain>cv. HA383</strain>
    </source>
</reference>
<sequence length="500" mass="58854">MEKFQRLDRSHYFLYPLIFQEYIYVLAHDHGLNGSILLENAGYDNKSSLLIVKRLIIRMYQQNHLILSVNDSKQTAFLGHNKNFYSQVMSEVSSTIMEIPLSLRLISSLERKGVVKSDNLRSIHSIFSFLEDNFSHLNYVLDILIPYPAHLEILVQALRYWIKDASSLHLLRFFLHECHNWDSLITSNSKKASSFFSKRNHRLFFFLYTSYVCEYESGFLFLRNQSSHLRSTSSGALIERIYFYGKIEHLAEVFARTFQANLWFFKDSFMHYVRYQGKSILASKGTFLLMNKRKDYFFNFWKSYFYLWSYPGRISINQLSNHSLDFLGYRSSVRLKPSMVRGQMLENTFLINNAIKKFDSIVPIMPLVGSLAKSKFCNALGHPIGKAIWADLSDSDIIERFGRIYRNLSHYHSGSSKKKSLYRVKYILRLSCARTLARKHKSTVRAFLKRFGSQLLEEFFTEEEQVFSLTFPRVSSISRRLSRRRIWYLDIVCINDLANH</sequence>
<proteinExistence type="inferred from homology"/>